<name>MAO1_ECOLI</name>
<dbReference type="EC" id="1.1.1.38"/>
<dbReference type="EMBL" id="U00096">
    <property type="protein sequence ID" value="AAC74552.2"/>
    <property type="molecule type" value="Genomic_DNA"/>
</dbReference>
<dbReference type="EMBL" id="AP009048">
    <property type="protein sequence ID" value="BAA15127.2"/>
    <property type="molecule type" value="Genomic_DNA"/>
</dbReference>
<dbReference type="EMBL" id="X55956">
    <property type="protein sequence ID" value="CAA39419.1"/>
    <property type="status" value="ALT_SEQ"/>
    <property type="molecule type" value="Genomic_DNA"/>
</dbReference>
<dbReference type="PIR" id="B64901">
    <property type="entry name" value="B64901"/>
</dbReference>
<dbReference type="RefSeq" id="NP_415996.2">
    <property type="nucleotide sequence ID" value="NC_000913.3"/>
</dbReference>
<dbReference type="RefSeq" id="WP_000433476.1">
    <property type="nucleotide sequence ID" value="NZ_SSZK01000038.1"/>
</dbReference>
<dbReference type="PDB" id="6AGS">
    <property type="method" value="X-ray"/>
    <property type="resolution" value="2.31 A"/>
    <property type="chains" value="A=1-565"/>
</dbReference>
<dbReference type="PDBsum" id="6AGS"/>
<dbReference type="SMR" id="P26616"/>
<dbReference type="BioGRID" id="4260208">
    <property type="interactions" value="276"/>
</dbReference>
<dbReference type="BioGRID" id="850392">
    <property type="interactions" value="3"/>
</dbReference>
<dbReference type="FunCoup" id="P26616">
    <property type="interactions" value="768"/>
</dbReference>
<dbReference type="IntAct" id="P26616">
    <property type="interactions" value="3"/>
</dbReference>
<dbReference type="STRING" id="511145.b1479"/>
<dbReference type="ChEMBL" id="CHEMBL3286080"/>
<dbReference type="jPOST" id="P26616"/>
<dbReference type="PaxDb" id="511145-b1479"/>
<dbReference type="EnsemblBacteria" id="AAC74552">
    <property type="protein sequence ID" value="AAC74552"/>
    <property type="gene ID" value="b1479"/>
</dbReference>
<dbReference type="GeneID" id="946031"/>
<dbReference type="KEGG" id="ecj:JW5238"/>
<dbReference type="KEGG" id="eco:b1479"/>
<dbReference type="KEGG" id="ecoc:C3026_08575"/>
<dbReference type="PATRIC" id="fig|1411691.4.peg.788"/>
<dbReference type="EchoBASE" id="EB0941"/>
<dbReference type="eggNOG" id="COG0281">
    <property type="taxonomic scope" value="Bacteria"/>
</dbReference>
<dbReference type="HOGENOM" id="CLU_011405_5_2_6"/>
<dbReference type="InParanoid" id="P26616"/>
<dbReference type="OMA" id="QIVNHMV"/>
<dbReference type="OrthoDB" id="3314528at2"/>
<dbReference type="PhylomeDB" id="P26616"/>
<dbReference type="BioCyc" id="EcoCyc:MALIC-NAD-MONOMER"/>
<dbReference type="BioCyc" id="MetaCyc:MALIC-NAD-MONOMER"/>
<dbReference type="BRENDA" id="1.1.1.38">
    <property type="organism ID" value="2026"/>
</dbReference>
<dbReference type="SABIO-RK" id="P26616"/>
<dbReference type="PRO" id="PR:P26616"/>
<dbReference type="Proteomes" id="UP000000625">
    <property type="component" value="Chromosome"/>
</dbReference>
<dbReference type="GO" id="GO:0005829">
    <property type="term" value="C:cytosol"/>
    <property type="evidence" value="ECO:0000314"/>
    <property type="project" value="EcoCyc"/>
</dbReference>
<dbReference type="GO" id="GO:0042802">
    <property type="term" value="F:identical protein binding"/>
    <property type="evidence" value="ECO:0000314"/>
    <property type="project" value="EcoCyc"/>
</dbReference>
<dbReference type="GO" id="GO:0004471">
    <property type="term" value="F:malate dehydrogenase (decarboxylating) (NAD+) activity"/>
    <property type="evidence" value="ECO:0000314"/>
    <property type="project" value="EcoCyc"/>
</dbReference>
<dbReference type="GO" id="GO:0004470">
    <property type="term" value="F:malic enzyme activity"/>
    <property type="evidence" value="ECO:0000318"/>
    <property type="project" value="GO_Central"/>
</dbReference>
<dbReference type="GO" id="GO:0046872">
    <property type="term" value="F:metal ion binding"/>
    <property type="evidence" value="ECO:0007669"/>
    <property type="project" value="UniProtKB-KW"/>
</dbReference>
<dbReference type="GO" id="GO:0051287">
    <property type="term" value="F:NAD binding"/>
    <property type="evidence" value="ECO:0007669"/>
    <property type="project" value="InterPro"/>
</dbReference>
<dbReference type="GO" id="GO:0008948">
    <property type="term" value="F:oxaloacetate decarboxylase activity"/>
    <property type="evidence" value="ECO:0007669"/>
    <property type="project" value="UniProtKB-UniRule"/>
</dbReference>
<dbReference type="GO" id="GO:0006094">
    <property type="term" value="P:gluconeogenesis"/>
    <property type="evidence" value="ECO:0000315"/>
    <property type="project" value="EcoCyc"/>
</dbReference>
<dbReference type="GO" id="GO:0006108">
    <property type="term" value="P:malate metabolic process"/>
    <property type="evidence" value="ECO:0000318"/>
    <property type="project" value="GO_Central"/>
</dbReference>
<dbReference type="GO" id="GO:0006090">
    <property type="term" value="P:pyruvate metabolic process"/>
    <property type="evidence" value="ECO:0000318"/>
    <property type="project" value="GO_Central"/>
</dbReference>
<dbReference type="CDD" id="cd05312">
    <property type="entry name" value="NAD_bind_1_malic_enz"/>
    <property type="match status" value="1"/>
</dbReference>
<dbReference type="FunFam" id="3.40.50.10380:FF:000001">
    <property type="entry name" value="NAD-dependent malic enzyme"/>
    <property type="match status" value="1"/>
</dbReference>
<dbReference type="FunFam" id="3.40.50.720:FF:000055">
    <property type="entry name" value="NAD-dependent malic enzyme"/>
    <property type="match status" value="1"/>
</dbReference>
<dbReference type="Gene3D" id="3.40.50.10380">
    <property type="entry name" value="Malic enzyme, N-terminal domain"/>
    <property type="match status" value="1"/>
</dbReference>
<dbReference type="Gene3D" id="3.40.50.720">
    <property type="entry name" value="NAD(P)-binding Rossmann-like Domain"/>
    <property type="match status" value="1"/>
</dbReference>
<dbReference type="HAMAP" id="MF_01619">
    <property type="entry name" value="NAD_malic_enz"/>
    <property type="match status" value="1"/>
</dbReference>
<dbReference type="InterPro" id="IPR046346">
    <property type="entry name" value="Aminoacid_DH-like_N_sf"/>
</dbReference>
<dbReference type="InterPro" id="IPR015884">
    <property type="entry name" value="Malic_enzyme_CS"/>
</dbReference>
<dbReference type="InterPro" id="IPR012301">
    <property type="entry name" value="Malic_N_dom"/>
</dbReference>
<dbReference type="InterPro" id="IPR037062">
    <property type="entry name" value="Malic_N_dom_sf"/>
</dbReference>
<dbReference type="InterPro" id="IPR012302">
    <property type="entry name" value="Malic_NAD-bd"/>
</dbReference>
<dbReference type="InterPro" id="IPR001891">
    <property type="entry name" value="Malic_OxRdtase"/>
</dbReference>
<dbReference type="InterPro" id="IPR036291">
    <property type="entry name" value="NAD(P)-bd_dom_sf"/>
</dbReference>
<dbReference type="InterPro" id="IPR023667">
    <property type="entry name" value="NAD_malic_enz_proteobac"/>
</dbReference>
<dbReference type="NCBIfam" id="NF010052">
    <property type="entry name" value="PRK13529.1"/>
    <property type="match status" value="1"/>
</dbReference>
<dbReference type="PANTHER" id="PTHR23406">
    <property type="entry name" value="MALIC ENZYME-RELATED"/>
    <property type="match status" value="1"/>
</dbReference>
<dbReference type="PANTHER" id="PTHR23406:SF34">
    <property type="entry name" value="NAD-DEPENDENT MALIC ENZYME, MITOCHONDRIAL"/>
    <property type="match status" value="1"/>
</dbReference>
<dbReference type="Pfam" id="PF00390">
    <property type="entry name" value="malic"/>
    <property type="match status" value="1"/>
</dbReference>
<dbReference type="Pfam" id="PF03949">
    <property type="entry name" value="Malic_M"/>
    <property type="match status" value="1"/>
</dbReference>
<dbReference type="PIRSF" id="PIRSF000106">
    <property type="entry name" value="ME"/>
    <property type="match status" value="1"/>
</dbReference>
<dbReference type="PRINTS" id="PR00072">
    <property type="entry name" value="MALOXRDTASE"/>
</dbReference>
<dbReference type="SMART" id="SM01274">
    <property type="entry name" value="malic"/>
    <property type="match status" value="1"/>
</dbReference>
<dbReference type="SMART" id="SM00919">
    <property type="entry name" value="Malic_M"/>
    <property type="match status" value="1"/>
</dbReference>
<dbReference type="SUPFAM" id="SSF53223">
    <property type="entry name" value="Aminoacid dehydrogenase-like, N-terminal domain"/>
    <property type="match status" value="1"/>
</dbReference>
<dbReference type="SUPFAM" id="SSF51735">
    <property type="entry name" value="NAD(P)-binding Rossmann-fold domains"/>
    <property type="match status" value="1"/>
</dbReference>
<dbReference type="PROSITE" id="PS00331">
    <property type="entry name" value="MALIC_ENZYMES"/>
    <property type="match status" value="1"/>
</dbReference>
<feature type="chain" id="PRO_0000160215" description="NAD-dependent malic enzyme">
    <location>
        <begin position="1"/>
        <end position="565"/>
    </location>
</feature>
<feature type="active site" description="Proton donor" evidence="1">
    <location>
        <position position="104"/>
    </location>
</feature>
<feature type="active site" description="Proton acceptor" evidence="1">
    <location>
        <position position="175"/>
    </location>
</feature>
<feature type="binding site" evidence="1">
    <location>
        <position position="157"/>
    </location>
    <ligand>
        <name>NAD(+)</name>
        <dbReference type="ChEBI" id="CHEBI:57540"/>
    </ligand>
</feature>
<feature type="binding site" evidence="1">
    <location>
        <position position="246"/>
    </location>
    <ligand>
        <name>a divalent metal cation</name>
        <dbReference type="ChEBI" id="CHEBI:60240"/>
    </ligand>
</feature>
<feature type="binding site" evidence="1">
    <location>
        <position position="247"/>
    </location>
    <ligand>
        <name>a divalent metal cation</name>
        <dbReference type="ChEBI" id="CHEBI:60240"/>
    </ligand>
</feature>
<feature type="binding site" evidence="1">
    <location>
        <position position="270"/>
    </location>
    <ligand>
        <name>a divalent metal cation</name>
        <dbReference type="ChEBI" id="CHEBI:60240"/>
    </ligand>
</feature>
<feature type="binding site" evidence="1">
    <location>
        <position position="270"/>
    </location>
    <ligand>
        <name>NAD(+)</name>
        <dbReference type="ChEBI" id="CHEBI:57540"/>
    </ligand>
</feature>
<feature type="binding site" evidence="1">
    <location>
        <position position="418"/>
    </location>
    <ligand>
        <name>NAD(+)</name>
        <dbReference type="ChEBI" id="CHEBI:57540"/>
    </ligand>
</feature>
<feature type="site" description="Important for activity" evidence="1">
    <location>
        <position position="270"/>
    </location>
</feature>
<feature type="strand" evidence="5">
    <location>
        <begin position="11"/>
        <end position="13"/>
    </location>
</feature>
<feature type="helix" evidence="5">
    <location>
        <begin position="17"/>
        <end position="21"/>
    </location>
</feature>
<feature type="turn" evidence="5">
    <location>
        <begin position="24"/>
        <end position="26"/>
    </location>
</feature>
<feature type="helix" evidence="5">
    <location>
        <begin position="29"/>
        <end position="31"/>
    </location>
</feature>
<feature type="helix" evidence="5">
    <location>
        <begin position="34"/>
        <end position="39"/>
    </location>
</feature>
<feature type="helix" evidence="5">
    <location>
        <begin position="53"/>
        <end position="65"/>
    </location>
</feature>
<feature type="helix" evidence="5">
    <location>
        <begin position="70"/>
        <end position="81"/>
    </location>
</feature>
<feature type="helix" evidence="5">
    <location>
        <begin position="85"/>
        <end position="93"/>
    </location>
</feature>
<feature type="helix" evidence="5">
    <location>
        <begin position="96"/>
        <end position="103"/>
    </location>
</feature>
<feature type="helix" evidence="5">
    <location>
        <begin position="107"/>
        <end position="113"/>
    </location>
</feature>
<feature type="helix" evidence="5">
    <location>
        <begin position="115"/>
        <end position="118"/>
    </location>
</feature>
<feature type="strand" evidence="5">
    <location>
        <begin position="124"/>
        <end position="128"/>
    </location>
</feature>
<feature type="helix" evidence="5">
    <location>
        <begin position="129"/>
        <end position="131"/>
    </location>
</feature>
<feature type="helix" evidence="5">
    <location>
        <begin position="135"/>
        <end position="140"/>
    </location>
</feature>
<feature type="strand" evidence="5">
    <location>
        <begin position="149"/>
        <end position="153"/>
    </location>
</feature>
<feature type="turn" evidence="5">
    <location>
        <begin position="159"/>
        <end position="161"/>
    </location>
</feature>
<feature type="helix" evidence="5">
    <location>
        <begin position="165"/>
        <end position="169"/>
    </location>
</feature>
<feature type="helix" evidence="5">
    <location>
        <begin position="170"/>
        <end position="183"/>
    </location>
</feature>
<feature type="helix" evidence="5">
    <location>
        <begin position="187"/>
        <end position="189"/>
    </location>
</feature>
<feature type="strand" evidence="5">
    <location>
        <begin position="190"/>
        <end position="196"/>
    </location>
</feature>
<feature type="helix" evidence="5">
    <location>
        <begin position="202"/>
        <end position="205"/>
    </location>
</feature>
<feature type="helix" evidence="5">
    <location>
        <begin position="220"/>
        <end position="237"/>
    </location>
</feature>
<feature type="strand" evidence="5">
    <location>
        <begin position="242"/>
        <end position="245"/>
    </location>
</feature>
<feature type="helix" evidence="5">
    <location>
        <begin position="250"/>
        <end position="260"/>
    </location>
</feature>
<feature type="turn" evidence="5">
    <location>
        <begin position="261"/>
        <end position="263"/>
    </location>
</feature>
<feature type="strand" evidence="5">
    <location>
        <begin position="264"/>
        <end position="268"/>
    </location>
</feature>
<feature type="turn" evidence="5">
    <location>
        <begin position="269"/>
        <end position="271"/>
    </location>
</feature>
<feature type="helix" evidence="5">
    <location>
        <begin position="272"/>
        <end position="288"/>
    </location>
</feature>
<feature type="strand" evidence="5">
    <location>
        <begin position="289"/>
        <end position="291"/>
    </location>
</feature>
<feature type="turn" evidence="5">
    <location>
        <begin position="293"/>
        <end position="295"/>
    </location>
</feature>
<feature type="strand" evidence="5">
    <location>
        <begin position="298"/>
        <end position="301"/>
    </location>
</feature>
<feature type="helix" evidence="5">
    <location>
        <begin position="305"/>
        <end position="319"/>
    </location>
</feature>
<feature type="turn" evidence="5">
    <location>
        <begin position="320"/>
        <end position="322"/>
    </location>
</feature>
<feature type="helix" evidence="5">
    <location>
        <begin position="325"/>
        <end position="330"/>
    </location>
</feature>
<feature type="strand" evidence="5">
    <location>
        <begin position="332"/>
        <end position="335"/>
    </location>
</feature>
<feature type="strand" evidence="5">
    <location>
        <begin position="337"/>
        <end position="339"/>
    </location>
</feature>
<feature type="helix" evidence="5">
    <location>
        <begin position="350"/>
        <end position="353"/>
    </location>
</feature>
<feature type="helix" evidence="5">
    <location>
        <begin position="359"/>
        <end position="362"/>
    </location>
</feature>
<feature type="helix" evidence="5">
    <location>
        <begin position="374"/>
        <end position="381"/>
    </location>
</feature>
<feature type="strand" evidence="5">
    <location>
        <begin position="384"/>
        <end position="388"/>
    </location>
</feature>
<feature type="helix" evidence="5">
    <location>
        <begin position="398"/>
        <end position="405"/>
    </location>
</feature>
<feature type="strand" evidence="5">
    <location>
        <begin position="412"/>
        <end position="415"/>
    </location>
</feature>
<feature type="helix" evidence="5">
    <location>
        <begin position="420"/>
        <end position="422"/>
    </location>
</feature>
<feature type="helix" evidence="5">
    <location>
        <begin position="427"/>
        <end position="432"/>
    </location>
</feature>
<feature type="turn" evidence="5">
    <location>
        <begin position="433"/>
        <end position="436"/>
    </location>
</feature>
<feature type="strand" evidence="5">
    <location>
        <begin position="439"/>
        <end position="444"/>
    </location>
</feature>
<feature type="strand" evidence="5">
    <location>
        <begin position="449"/>
        <end position="451"/>
    </location>
</feature>
<feature type="strand" evidence="5">
    <location>
        <begin position="454"/>
        <end position="456"/>
    </location>
</feature>
<feature type="helix" evidence="5">
    <location>
        <begin position="463"/>
        <end position="465"/>
    </location>
</feature>
<feature type="helix" evidence="5">
    <location>
        <begin position="467"/>
        <end position="477"/>
    </location>
</feature>
<feature type="helix" evidence="5">
    <location>
        <begin position="484"/>
        <end position="496"/>
    </location>
</feature>
<feature type="helix" evidence="5">
    <location>
        <begin position="499"/>
        <end position="502"/>
    </location>
</feature>
<feature type="strand" evidence="5">
    <location>
        <begin position="503"/>
        <end position="506"/>
    </location>
</feature>
<feature type="helix" evidence="5">
    <location>
        <begin position="512"/>
        <end position="514"/>
    </location>
</feature>
<feature type="helix" evidence="5">
    <location>
        <begin position="515"/>
        <end position="532"/>
    </location>
</feature>
<feature type="helix" evidence="5">
    <location>
        <begin position="541"/>
        <end position="550"/>
    </location>
</feature>
<feature type="strand" evidence="5">
    <location>
        <begin position="560"/>
        <end position="562"/>
    </location>
</feature>
<keyword id="KW-0002">3D-structure</keyword>
<keyword id="KW-0479">Metal-binding</keyword>
<keyword id="KW-0520">NAD</keyword>
<keyword id="KW-0560">Oxidoreductase</keyword>
<keyword id="KW-1185">Reference proteome</keyword>
<comment type="catalytic activity">
    <reaction>
        <text>(S)-malate + NAD(+) = pyruvate + CO2 + NADH</text>
        <dbReference type="Rhea" id="RHEA:12653"/>
        <dbReference type="ChEBI" id="CHEBI:15361"/>
        <dbReference type="ChEBI" id="CHEBI:15589"/>
        <dbReference type="ChEBI" id="CHEBI:16526"/>
        <dbReference type="ChEBI" id="CHEBI:57540"/>
        <dbReference type="ChEBI" id="CHEBI:57945"/>
        <dbReference type="EC" id="1.1.1.38"/>
    </reaction>
</comment>
<comment type="catalytic activity">
    <reaction>
        <text>oxaloacetate + H(+) = pyruvate + CO2</text>
        <dbReference type="Rhea" id="RHEA:15641"/>
        <dbReference type="ChEBI" id="CHEBI:15361"/>
        <dbReference type="ChEBI" id="CHEBI:15378"/>
        <dbReference type="ChEBI" id="CHEBI:16452"/>
        <dbReference type="ChEBI" id="CHEBI:16526"/>
        <dbReference type="EC" id="1.1.1.38"/>
    </reaction>
</comment>
<comment type="cofactor">
    <cofactor evidence="3">
        <name>Mg(2+)</name>
        <dbReference type="ChEBI" id="CHEBI:18420"/>
    </cofactor>
    <cofactor evidence="3">
        <name>Mn(2+)</name>
        <dbReference type="ChEBI" id="CHEBI:29035"/>
    </cofactor>
    <text evidence="3">Divalent metal cations. Prefers magnesium or manganese.</text>
</comment>
<comment type="activity regulation">
    <text evidence="2 3">Non-competitively inhibited by high concentrations of NAD(+) and L-malate. Also inhibited by CoA, acetyl-phosphate, palmitoyl-CoA, and oxaloacetate. Activated by aspartate.</text>
</comment>
<comment type="biophysicochemical properties">
    <kinetics>
        <KM evidence="2 3">0.42 mM for L-malate</KM>
        <KM evidence="2 3">0.66 mM for L-malate</KM>
        <KM evidence="2 3">0.097 mM for NAD(+)</KM>
        <KM evidence="2 3">0.0688 mM for NAD(+)</KM>
        <KM evidence="2 3">2.59 mM for pyruvate</KM>
        <Vmax evidence="2 3">125.47 umol/min/mg enzyme</Vmax>
        <text>At pH 7.2.</text>
    </kinetics>
    <phDependence>
        <text evidence="2 3">Optimum pH is 7.2 to 7.5 for L-malate.</text>
    </phDependence>
</comment>
<comment type="subunit">
    <text evidence="3">Homotetramer.</text>
</comment>
<comment type="miscellaneous">
    <text>Can also use NADP(+) but is more effective with NAD(+).</text>
</comment>
<comment type="similarity">
    <text evidence="4">Belongs to the malic enzymes family.</text>
</comment>
<comment type="sequence caution" evidence="4">
    <conflict type="erroneous initiation">
        <sequence resource="EMBL-CDS" id="CAA39419"/>
    </conflict>
    <text>Extended N-terminus.</text>
</comment>
<comment type="sequence caution" evidence="4">
    <conflict type="miscellaneous discrepancy">
        <sequence resource="EMBL-CDS" id="CAA39419"/>
    </conflict>
    <text>The sequence differs from position 433 onward for unknown reasons.</text>
</comment>
<proteinExistence type="evidence at protein level"/>
<sequence length="565" mass="63197">MEPKTKKQRSLYIPYAGPVLLEFPLLNKGSAFSMEERRNFNLLGLLPEVVETIEEQAERAWIQYQGFKTEIDKHIYLRNIQDTNETLFYRLVNNHLDEMMPVIYTPTVGAACERFSEIYRRSRGVFISYQNRHNMDDILQNVPNHNIKVIVVTDGERILGLGDQGIGGMGIPIGKLSLYTACGGISPAYTLPVVLDVGTNNQQLLNDPLYMGWRNPRITDDEYYEFVDEFIQAVKQRWPDVLLQFEDFAQKNAMPLLNRYRNEICSFNDDIQGTAAVTVGTLIAASRAAGGQLSEKKIVFLGAGSAGCGIAEMIISQTQREGLSEEAARQKVFMVDRFGLLTDKMPNLLPFQTKLVQKRENLSDWDTDSDVLSLLDVVRNVKPDILIGVSGQTGLFTEEIIREMHKHCPRPIVMPLSNPTSRVEATPQDIIAWTEGNALVATGSPFNPVVWKDKIYPIAQCNNAFIFPGIGLGVIASGASRITDEMLMSASETLAQYSPLVLNGEGMVLPELKDIQKVSRAIAFAVGKMAQQQGVAVKTSAEALQQAIDDNFWQAEYRDYRRTSI</sequence>
<reference key="1">
    <citation type="journal article" date="1996" name="DNA Res.">
        <title>A 570-kb DNA sequence of the Escherichia coli K-12 genome corresponding to the 28.0-40.1 min region on the linkage map.</title>
        <authorList>
            <person name="Aiba H."/>
            <person name="Baba T."/>
            <person name="Fujita K."/>
            <person name="Hayashi K."/>
            <person name="Inada T."/>
            <person name="Isono K."/>
            <person name="Itoh T."/>
            <person name="Kasai H."/>
            <person name="Kashimoto K."/>
            <person name="Kimura S."/>
            <person name="Kitakawa M."/>
            <person name="Kitagawa M."/>
            <person name="Makino K."/>
            <person name="Miki T."/>
            <person name="Mizobuchi K."/>
            <person name="Mori H."/>
            <person name="Mori T."/>
            <person name="Motomura K."/>
            <person name="Nakade S."/>
            <person name="Nakamura Y."/>
            <person name="Nashimoto H."/>
            <person name="Nishio Y."/>
            <person name="Oshima T."/>
            <person name="Saito N."/>
            <person name="Sampei G."/>
            <person name="Seki Y."/>
            <person name="Sivasundaram S."/>
            <person name="Tagami H."/>
            <person name="Takeda J."/>
            <person name="Takemoto K."/>
            <person name="Takeuchi Y."/>
            <person name="Wada C."/>
            <person name="Yamamoto Y."/>
            <person name="Horiuchi T."/>
        </authorList>
    </citation>
    <scope>NUCLEOTIDE SEQUENCE [LARGE SCALE GENOMIC DNA]</scope>
    <source>
        <strain>K12 / W3110 / ATCC 27325 / DSM 5911</strain>
    </source>
</reference>
<reference key="2">
    <citation type="journal article" date="1997" name="Science">
        <title>The complete genome sequence of Escherichia coli K-12.</title>
        <authorList>
            <person name="Blattner F.R."/>
            <person name="Plunkett G. III"/>
            <person name="Bloch C.A."/>
            <person name="Perna N.T."/>
            <person name="Burland V."/>
            <person name="Riley M."/>
            <person name="Collado-Vides J."/>
            <person name="Glasner J.D."/>
            <person name="Rode C.K."/>
            <person name="Mayhew G.F."/>
            <person name="Gregor J."/>
            <person name="Davis N.W."/>
            <person name="Kirkpatrick H.A."/>
            <person name="Goeden M.A."/>
            <person name="Rose D.J."/>
            <person name="Mau B."/>
            <person name="Shao Y."/>
        </authorList>
    </citation>
    <scope>NUCLEOTIDE SEQUENCE [LARGE SCALE GENOMIC DNA]</scope>
    <source>
        <strain>K12 / MG1655 / ATCC 47076</strain>
    </source>
</reference>
<reference key="3">
    <citation type="journal article" date="2006" name="Mol. Syst. Biol.">
        <title>Highly accurate genome sequences of Escherichia coli K-12 strains MG1655 and W3110.</title>
        <authorList>
            <person name="Hayashi K."/>
            <person name="Morooka N."/>
            <person name="Yamamoto Y."/>
            <person name="Fujita K."/>
            <person name="Isono K."/>
            <person name="Choi S."/>
            <person name="Ohtsubo E."/>
            <person name="Baba T."/>
            <person name="Wanner B.L."/>
            <person name="Mori H."/>
            <person name="Horiuchi T."/>
        </authorList>
    </citation>
    <scope>NUCLEOTIDE SEQUENCE [LARGE SCALE GENOMIC DNA]</scope>
    <source>
        <strain>K12 / W3110 / ATCC 27325 / DSM 5911</strain>
    </source>
</reference>
<reference key="4">
    <citation type="journal article" date="1990" name="Genetics">
        <title>Physical analysis of spontaneous and mutagen-induced mutants of Escherichia coli K-12 expressing DNA exonuclease VIII activity.</title>
        <authorList>
            <person name="Mahajan S.K."/>
            <person name="Chu C.C."/>
            <person name="Willis D.K."/>
            <person name="Templin A."/>
            <person name="Clark A.J."/>
        </authorList>
    </citation>
    <scope>NUCLEOTIDE SEQUENCE [GENOMIC DNA] OF 1-431</scope>
    <source>
        <strain>K12</strain>
    </source>
</reference>
<reference key="5">
    <citation type="journal article" date="2007" name="J. Bacteriol.">
        <title>Escherichia coli malic enzymes: two isoforms with substantial differences in kinetic properties, metabolic regulation, and structure.</title>
        <authorList>
            <person name="Bologna F.P."/>
            <person name="Andreo C.S."/>
            <person name="Drincovich M.F."/>
        </authorList>
    </citation>
    <scope>BIOPHYSICOCHEMICAL PROPERTIES</scope>
    <scope>COFACTOR</scope>
    <scope>ACTIVITY REGULATION</scope>
    <scope>SUBUNIT</scope>
    <source>
        <strain>K12</strain>
    </source>
</reference>
<reference key="6">
    <citation type="journal article" date="2007" name="Protein Expr. Purif.">
        <title>Over-expression, purification, and characterization of recombinant NAD-malic enzyme from Escherichia coli K12.</title>
        <authorList>
            <person name="Wang J."/>
            <person name="Tan H."/>
            <person name="Zhao Z.K."/>
        </authorList>
    </citation>
    <scope>BIOPHYSICOCHEMICAL PROPERTIES</scope>
    <scope>ACTIVITY REGULATION</scope>
    <source>
        <strain>K12 / MG1655 / ATCC 47076</strain>
    </source>
</reference>
<accession>P26616</accession>
<accession>P78224</accession>
<protein>
    <recommendedName>
        <fullName>NAD-dependent malic enzyme</fullName>
        <shortName>NAD-ME</shortName>
        <ecNumber>1.1.1.38</ecNumber>
    </recommendedName>
</protein>
<evidence type="ECO:0000250" key="1"/>
<evidence type="ECO:0000269" key="2">
    <source>
    </source>
</evidence>
<evidence type="ECO:0000269" key="3">
    <source>
    </source>
</evidence>
<evidence type="ECO:0000305" key="4"/>
<evidence type="ECO:0007829" key="5">
    <source>
        <dbReference type="PDB" id="6AGS"/>
    </source>
</evidence>
<organism>
    <name type="scientific">Escherichia coli (strain K12)</name>
    <dbReference type="NCBI Taxonomy" id="83333"/>
    <lineage>
        <taxon>Bacteria</taxon>
        <taxon>Pseudomonadati</taxon>
        <taxon>Pseudomonadota</taxon>
        <taxon>Gammaproteobacteria</taxon>
        <taxon>Enterobacterales</taxon>
        <taxon>Enterobacteriaceae</taxon>
        <taxon>Escherichia</taxon>
    </lineage>
</organism>
<gene>
    <name type="primary">maeA</name>
    <name type="synonym">sfcA</name>
    <name type="ordered locus">b1479</name>
    <name type="ordered locus">JW5238</name>
</gene>